<proteinExistence type="inferred from homology"/>
<sequence length="245" mass="27201">MPRYKLTIEYDGAPFFGWQVQDTLPSVQGALEAAVKAMTGADLRVHGAGRTDAGVHARGQVAHVDIEKQFPPGRFRDGLNAHLRPHPIAVLEAEIVPDTFEARFSAVKRHYRYRIVNTRANLALDIGHAWRVPRRLDSDAMHAAARRLLGKHDFTTFRDTECQAKSPEKTLDQLDVLRDGREITIITSARSFLHSQVRSMVGSLVWVGEGRWTADDLSAALAARNRAACGIVAPPDGLYLVKVDY</sequence>
<accession>Q89BP1</accession>
<gene>
    <name evidence="1" type="primary">truA</name>
    <name type="ordered locus">bll8107</name>
</gene>
<dbReference type="EC" id="5.4.99.12" evidence="1"/>
<dbReference type="EMBL" id="BA000040">
    <property type="protein sequence ID" value="BAC53372.1"/>
    <property type="status" value="ALT_INIT"/>
    <property type="molecule type" value="Genomic_DNA"/>
</dbReference>
<dbReference type="RefSeq" id="NP_774747.1">
    <property type="nucleotide sequence ID" value="NC_004463.1"/>
</dbReference>
<dbReference type="RefSeq" id="WP_038966077.1">
    <property type="nucleotide sequence ID" value="NC_004463.1"/>
</dbReference>
<dbReference type="SMR" id="Q89BP1"/>
<dbReference type="FunCoup" id="Q89BP1">
    <property type="interactions" value="574"/>
</dbReference>
<dbReference type="STRING" id="224911.AAV28_38230"/>
<dbReference type="EnsemblBacteria" id="BAC53372">
    <property type="protein sequence ID" value="BAC53372"/>
    <property type="gene ID" value="BAC53372"/>
</dbReference>
<dbReference type="GeneID" id="46495018"/>
<dbReference type="KEGG" id="bja:bll8107"/>
<dbReference type="PATRIC" id="fig|224911.44.peg.8277"/>
<dbReference type="eggNOG" id="COG0101">
    <property type="taxonomic scope" value="Bacteria"/>
</dbReference>
<dbReference type="HOGENOM" id="CLU_014673_0_2_5"/>
<dbReference type="InParanoid" id="Q89BP1"/>
<dbReference type="OrthoDB" id="9811823at2"/>
<dbReference type="Proteomes" id="UP000002526">
    <property type="component" value="Chromosome"/>
</dbReference>
<dbReference type="GO" id="GO:0009982">
    <property type="term" value="F:pseudouridine synthase activity"/>
    <property type="evidence" value="ECO:0000318"/>
    <property type="project" value="GO_Central"/>
</dbReference>
<dbReference type="GO" id="GO:0003723">
    <property type="term" value="F:RNA binding"/>
    <property type="evidence" value="ECO:0007669"/>
    <property type="project" value="InterPro"/>
</dbReference>
<dbReference type="GO" id="GO:0160147">
    <property type="term" value="F:tRNA pseudouridine(38-40) synthase activity"/>
    <property type="evidence" value="ECO:0007669"/>
    <property type="project" value="UniProtKB-EC"/>
</dbReference>
<dbReference type="GO" id="GO:0031119">
    <property type="term" value="P:tRNA pseudouridine synthesis"/>
    <property type="evidence" value="ECO:0000318"/>
    <property type="project" value="GO_Central"/>
</dbReference>
<dbReference type="CDD" id="cd02570">
    <property type="entry name" value="PseudoU_synth_EcTruA"/>
    <property type="match status" value="1"/>
</dbReference>
<dbReference type="FunFam" id="3.30.70.580:FF:000001">
    <property type="entry name" value="tRNA pseudouridine synthase A"/>
    <property type="match status" value="1"/>
</dbReference>
<dbReference type="FunFam" id="3.30.70.660:FF:000038">
    <property type="entry name" value="tRNA pseudouridine synthase A"/>
    <property type="match status" value="1"/>
</dbReference>
<dbReference type="Gene3D" id="3.30.70.660">
    <property type="entry name" value="Pseudouridine synthase I, catalytic domain, C-terminal subdomain"/>
    <property type="match status" value="1"/>
</dbReference>
<dbReference type="Gene3D" id="3.30.70.580">
    <property type="entry name" value="Pseudouridine synthase I, catalytic domain, N-terminal subdomain"/>
    <property type="match status" value="1"/>
</dbReference>
<dbReference type="HAMAP" id="MF_00171">
    <property type="entry name" value="TruA"/>
    <property type="match status" value="1"/>
</dbReference>
<dbReference type="InterPro" id="IPR020103">
    <property type="entry name" value="PsdUridine_synth_cat_dom_sf"/>
</dbReference>
<dbReference type="InterPro" id="IPR001406">
    <property type="entry name" value="PsdUridine_synth_TruA"/>
</dbReference>
<dbReference type="InterPro" id="IPR020097">
    <property type="entry name" value="PsdUridine_synth_TruA_a/b_dom"/>
</dbReference>
<dbReference type="InterPro" id="IPR020095">
    <property type="entry name" value="PsdUridine_synth_TruA_C"/>
</dbReference>
<dbReference type="InterPro" id="IPR020094">
    <property type="entry name" value="TruA/RsuA/RluB/E/F_N"/>
</dbReference>
<dbReference type="NCBIfam" id="TIGR00071">
    <property type="entry name" value="hisT_truA"/>
    <property type="match status" value="1"/>
</dbReference>
<dbReference type="PANTHER" id="PTHR11142">
    <property type="entry name" value="PSEUDOURIDYLATE SYNTHASE"/>
    <property type="match status" value="1"/>
</dbReference>
<dbReference type="PANTHER" id="PTHR11142:SF0">
    <property type="entry name" value="TRNA PSEUDOURIDINE SYNTHASE-LIKE 1"/>
    <property type="match status" value="1"/>
</dbReference>
<dbReference type="Pfam" id="PF01416">
    <property type="entry name" value="PseudoU_synth_1"/>
    <property type="match status" value="2"/>
</dbReference>
<dbReference type="PIRSF" id="PIRSF001430">
    <property type="entry name" value="tRNA_psdUrid_synth"/>
    <property type="match status" value="1"/>
</dbReference>
<dbReference type="SUPFAM" id="SSF55120">
    <property type="entry name" value="Pseudouridine synthase"/>
    <property type="match status" value="1"/>
</dbReference>
<comment type="function">
    <text evidence="1">Formation of pseudouridine at positions 38, 39 and 40 in the anticodon stem and loop of transfer RNAs.</text>
</comment>
<comment type="catalytic activity">
    <reaction evidence="1">
        <text>uridine(38/39/40) in tRNA = pseudouridine(38/39/40) in tRNA</text>
        <dbReference type="Rhea" id="RHEA:22376"/>
        <dbReference type="Rhea" id="RHEA-COMP:10085"/>
        <dbReference type="Rhea" id="RHEA-COMP:10087"/>
        <dbReference type="ChEBI" id="CHEBI:65314"/>
        <dbReference type="ChEBI" id="CHEBI:65315"/>
        <dbReference type="EC" id="5.4.99.12"/>
    </reaction>
</comment>
<comment type="subunit">
    <text evidence="1">Homodimer.</text>
</comment>
<comment type="similarity">
    <text evidence="1">Belongs to the tRNA pseudouridine synthase TruA family.</text>
</comment>
<comment type="sequence caution" evidence="2">
    <conflict type="erroneous initiation">
        <sequence resource="EMBL-CDS" id="BAC53372"/>
    </conflict>
</comment>
<keyword id="KW-0413">Isomerase</keyword>
<keyword id="KW-1185">Reference proteome</keyword>
<keyword id="KW-0819">tRNA processing</keyword>
<organism>
    <name type="scientific">Bradyrhizobium diazoefficiens (strain JCM 10833 / BCRC 13528 / IAM 13628 / NBRC 14792 / USDA 110)</name>
    <dbReference type="NCBI Taxonomy" id="224911"/>
    <lineage>
        <taxon>Bacteria</taxon>
        <taxon>Pseudomonadati</taxon>
        <taxon>Pseudomonadota</taxon>
        <taxon>Alphaproteobacteria</taxon>
        <taxon>Hyphomicrobiales</taxon>
        <taxon>Nitrobacteraceae</taxon>
        <taxon>Bradyrhizobium</taxon>
    </lineage>
</organism>
<evidence type="ECO:0000255" key="1">
    <source>
        <dbReference type="HAMAP-Rule" id="MF_00171"/>
    </source>
</evidence>
<evidence type="ECO:0000305" key="2"/>
<reference key="1">
    <citation type="journal article" date="2002" name="DNA Res.">
        <title>Complete genomic sequence of nitrogen-fixing symbiotic bacterium Bradyrhizobium japonicum USDA110.</title>
        <authorList>
            <person name="Kaneko T."/>
            <person name="Nakamura Y."/>
            <person name="Sato S."/>
            <person name="Minamisawa K."/>
            <person name="Uchiumi T."/>
            <person name="Sasamoto S."/>
            <person name="Watanabe A."/>
            <person name="Idesawa K."/>
            <person name="Iriguchi M."/>
            <person name="Kawashima K."/>
            <person name="Kohara M."/>
            <person name="Matsumoto M."/>
            <person name="Shimpo S."/>
            <person name="Tsuruoka H."/>
            <person name="Wada T."/>
            <person name="Yamada M."/>
            <person name="Tabata S."/>
        </authorList>
    </citation>
    <scope>NUCLEOTIDE SEQUENCE [LARGE SCALE GENOMIC DNA]</scope>
    <source>
        <strain>JCM 10833 / BCRC 13528 / IAM 13628 / NBRC 14792 / USDA 110</strain>
    </source>
</reference>
<name>TRUA_BRADU</name>
<protein>
    <recommendedName>
        <fullName evidence="1">tRNA pseudouridine synthase A</fullName>
        <ecNumber evidence="1">5.4.99.12</ecNumber>
    </recommendedName>
    <alternativeName>
        <fullName evidence="1">tRNA pseudouridine(38-40) synthase</fullName>
    </alternativeName>
    <alternativeName>
        <fullName evidence="1">tRNA pseudouridylate synthase I</fullName>
    </alternativeName>
    <alternativeName>
        <fullName evidence="1">tRNA-uridine isomerase I</fullName>
    </alternativeName>
</protein>
<feature type="chain" id="PRO_0000057345" description="tRNA pseudouridine synthase A">
    <location>
        <begin position="1"/>
        <end position="245"/>
    </location>
</feature>
<feature type="active site" description="Nucleophile" evidence="1">
    <location>
        <position position="52"/>
    </location>
</feature>
<feature type="binding site" evidence="1">
    <location>
        <position position="111"/>
    </location>
    <ligand>
        <name>substrate</name>
    </ligand>
</feature>